<organism>
    <name type="scientific">Shewanella baltica (strain OS155 / ATCC BAA-1091)</name>
    <dbReference type="NCBI Taxonomy" id="325240"/>
    <lineage>
        <taxon>Bacteria</taxon>
        <taxon>Pseudomonadati</taxon>
        <taxon>Pseudomonadota</taxon>
        <taxon>Gammaproteobacteria</taxon>
        <taxon>Alteromonadales</taxon>
        <taxon>Shewanellaceae</taxon>
        <taxon>Shewanella</taxon>
    </lineage>
</organism>
<name>SYGA_SHEB5</name>
<dbReference type="EC" id="6.1.1.14" evidence="1"/>
<dbReference type="EMBL" id="CP000563">
    <property type="protein sequence ID" value="ABN59550.1"/>
    <property type="molecule type" value="Genomic_DNA"/>
</dbReference>
<dbReference type="RefSeq" id="WP_006083814.1">
    <property type="nucleotide sequence ID" value="NC_009052.1"/>
</dbReference>
<dbReference type="SMR" id="A3CYI7"/>
<dbReference type="STRING" id="325240.Sbal_0013"/>
<dbReference type="GeneID" id="11770383"/>
<dbReference type="KEGG" id="sbl:Sbal_0013"/>
<dbReference type="HOGENOM" id="CLU_057066_1_0_6"/>
<dbReference type="OrthoDB" id="9802183at2"/>
<dbReference type="Proteomes" id="UP000001557">
    <property type="component" value="Chromosome"/>
</dbReference>
<dbReference type="GO" id="GO:0005829">
    <property type="term" value="C:cytosol"/>
    <property type="evidence" value="ECO:0007669"/>
    <property type="project" value="TreeGrafter"/>
</dbReference>
<dbReference type="GO" id="GO:0005524">
    <property type="term" value="F:ATP binding"/>
    <property type="evidence" value="ECO:0007669"/>
    <property type="project" value="UniProtKB-UniRule"/>
</dbReference>
<dbReference type="GO" id="GO:0004820">
    <property type="term" value="F:glycine-tRNA ligase activity"/>
    <property type="evidence" value="ECO:0007669"/>
    <property type="project" value="UniProtKB-UniRule"/>
</dbReference>
<dbReference type="GO" id="GO:0006426">
    <property type="term" value="P:glycyl-tRNA aminoacylation"/>
    <property type="evidence" value="ECO:0007669"/>
    <property type="project" value="UniProtKB-UniRule"/>
</dbReference>
<dbReference type="CDD" id="cd00733">
    <property type="entry name" value="GlyRS_alpha_core"/>
    <property type="match status" value="1"/>
</dbReference>
<dbReference type="FunFam" id="3.30.930.10:FF:000006">
    <property type="entry name" value="Glycine--tRNA ligase alpha subunit"/>
    <property type="match status" value="1"/>
</dbReference>
<dbReference type="Gene3D" id="3.30.930.10">
    <property type="entry name" value="Bira Bifunctional Protein, Domain 2"/>
    <property type="match status" value="1"/>
</dbReference>
<dbReference type="Gene3D" id="1.20.58.180">
    <property type="entry name" value="Class II aaRS and biotin synthetases, domain 2"/>
    <property type="match status" value="1"/>
</dbReference>
<dbReference type="HAMAP" id="MF_00254">
    <property type="entry name" value="Gly_tRNA_synth_alpha"/>
    <property type="match status" value="1"/>
</dbReference>
<dbReference type="InterPro" id="IPR045864">
    <property type="entry name" value="aa-tRNA-synth_II/BPL/LPL"/>
</dbReference>
<dbReference type="InterPro" id="IPR006194">
    <property type="entry name" value="Gly-tRNA-synth_heterodimer"/>
</dbReference>
<dbReference type="InterPro" id="IPR002310">
    <property type="entry name" value="Gly-tRNA_ligase_asu"/>
</dbReference>
<dbReference type="NCBIfam" id="TIGR00388">
    <property type="entry name" value="glyQ"/>
    <property type="match status" value="1"/>
</dbReference>
<dbReference type="NCBIfam" id="NF006827">
    <property type="entry name" value="PRK09348.1"/>
    <property type="match status" value="1"/>
</dbReference>
<dbReference type="PANTHER" id="PTHR30075:SF2">
    <property type="entry name" value="GLYCINE--TRNA LIGASE, CHLOROPLASTIC_MITOCHONDRIAL 2"/>
    <property type="match status" value="1"/>
</dbReference>
<dbReference type="PANTHER" id="PTHR30075">
    <property type="entry name" value="GLYCYL-TRNA SYNTHETASE"/>
    <property type="match status" value="1"/>
</dbReference>
<dbReference type="Pfam" id="PF02091">
    <property type="entry name" value="tRNA-synt_2e"/>
    <property type="match status" value="1"/>
</dbReference>
<dbReference type="PRINTS" id="PR01044">
    <property type="entry name" value="TRNASYNTHGA"/>
</dbReference>
<dbReference type="SUPFAM" id="SSF55681">
    <property type="entry name" value="Class II aaRS and biotin synthetases"/>
    <property type="match status" value="1"/>
</dbReference>
<dbReference type="PROSITE" id="PS50861">
    <property type="entry name" value="AA_TRNA_LIGASE_II_GLYAB"/>
    <property type="match status" value="1"/>
</dbReference>
<reference key="1">
    <citation type="submission" date="2007-02" db="EMBL/GenBank/DDBJ databases">
        <title>Complete sequence of chromosome of Shewanella baltica OS155.</title>
        <authorList>
            <consortium name="US DOE Joint Genome Institute"/>
            <person name="Copeland A."/>
            <person name="Lucas S."/>
            <person name="Lapidus A."/>
            <person name="Barry K."/>
            <person name="Detter J.C."/>
            <person name="Glavina del Rio T."/>
            <person name="Hammon N."/>
            <person name="Israni S."/>
            <person name="Dalin E."/>
            <person name="Tice H."/>
            <person name="Pitluck S."/>
            <person name="Sims D.R."/>
            <person name="Brettin T."/>
            <person name="Bruce D."/>
            <person name="Han C."/>
            <person name="Tapia R."/>
            <person name="Brainard J."/>
            <person name="Schmutz J."/>
            <person name="Larimer F."/>
            <person name="Land M."/>
            <person name="Hauser L."/>
            <person name="Kyrpides N."/>
            <person name="Mikhailova N."/>
            <person name="Brettar I."/>
            <person name="Klappenbach J."/>
            <person name="Konstantinidis K."/>
            <person name="Rodrigues J."/>
            <person name="Tiedje J."/>
            <person name="Richardson P."/>
        </authorList>
    </citation>
    <scope>NUCLEOTIDE SEQUENCE [LARGE SCALE GENOMIC DNA]</scope>
    <source>
        <strain>OS155 / ATCC BAA-1091</strain>
    </source>
</reference>
<feature type="chain" id="PRO_1000047483" description="Glycine--tRNA ligase alpha subunit">
    <location>
        <begin position="1"/>
        <end position="301"/>
    </location>
</feature>
<gene>
    <name evidence="1" type="primary">glyQ</name>
    <name type="ordered locus">Sbal_0013</name>
</gene>
<accession>A3CYI7</accession>
<protein>
    <recommendedName>
        <fullName evidence="1">Glycine--tRNA ligase alpha subunit</fullName>
        <ecNumber evidence="1">6.1.1.14</ecNumber>
    </recommendedName>
    <alternativeName>
        <fullName evidence="1">Glycyl-tRNA synthetase alpha subunit</fullName>
        <shortName evidence="1">GlyRS</shortName>
    </alternativeName>
</protein>
<comment type="catalytic activity">
    <reaction evidence="1">
        <text>tRNA(Gly) + glycine + ATP = glycyl-tRNA(Gly) + AMP + diphosphate</text>
        <dbReference type="Rhea" id="RHEA:16013"/>
        <dbReference type="Rhea" id="RHEA-COMP:9664"/>
        <dbReference type="Rhea" id="RHEA-COMP:9683"/>
        <dbReference type="ChEBI" id="CHEBI:30616"/>
        <dbReference type="ChEBI" id="CHEBI:33019"/>
        <dbReference type="ChEBI" id="CHEBI:57305"/>
        <dbReference type="ChEBI" id="CHEBI:78442"/>
        <dbReference type="ChEBI" id="CHEBI:78522"/>
        <dbReference type="ChEBI" id="CHEBI:456215"/>
        <dbReference type="EC" id="6.1.1.14"/>
    </reaction>
</comment>
<comment type="subunit">
    <text evidence="1">Tetramer of two alpha and two beta subunits.</text>
</comment>
<comment type="subcellular location">
    <subcellularLocation>
        <location evidence="1">Cytoplasm</location>
    </subcellularLocation>
</comment>
<comment type="similarity">
    <text evidence="1">Belongs to the class-II aminoacyl-tRNA synthetase family.</text>
</comment>
<keyword id="KW-0030">Aminoacyl-tRNA synthetase</keyword>
<keyword id="KW-0067">ATP-binding</keyword>
<keyword id="KW-0963">Cytoplasm</keyword>
<keyword id="KW-0436">Ligase</keyword>
<keyword id="KW-0547">Nucleotide-binding</keyword>
<keyword id="KW-0648">Protein biosynthesis</keyword>
<keyword id="KW-1185">Reference proteome</keyword>
<sequence>MTTKHDVKTFQGFILTLQEYWAQQGCAIVQPLDMEVGAGTFHPQTFLRSLGPEPMSSAYVQPSRRPTDGRYGENPNRLQHYYQFQVVLKPSPDNIQELYLGSLQALGIDTQIHDIRFVEDNWESPTLGAWGLGWEIWLNGMEVTQFTYFQQVGGIECSPVTGEITYGLERLAMYIQGVDSVYDLVWTDGPLGRITYGDVFHQNEVEQSTYNFEHADVDFMFTLFDQCEKMCQHLLSLEKPLPLPAYEQVMKASHAFNLLDARHAISVTERQRYILRVRTMAKAVAESYYQAREALGFPMCK</sequence>
<evidence type="ECO:0000255" key="1">
    <source>
        <dbReference type="HAMAP-Rule" id="MF_00254"/>
    </source>
</evidence>
<proteinExistence type="inferred from homology"/>